<name>MYO1A_HUMAN</name>
<sequence>MPLLEGSVGVEDLVLLEPLVEESLLKNLQLRYENKEIYTYIGNVVISVNPYQQLPIYGPEFIAKYQDYTFYELKPHIYALANVAYQSLRDRDRDQCILITGESGSGKTEASKLVMSYVAAVCGKGEQVNSVKEQLLQSNPVLEAFGNAKTIRNNNSSRFGKYMDIEFDFKGSPLGGVITNYLLEKSRLVKQLKGERNFHIFYQLLAGADEQLLKALKLERDTTGYAYLNHEVSRVDGMDDASSFRAVQSAMAVIGFSEEEIRQVLEVTSMVLKLGNVLVADEFQASGIPASGIRDGRGVREIGEMVGLNSEEVERALCSRTMETAKEKVVTALNVMQAQYARDALAKNIYSRLFDWIVNRINESIKVGIGEKKKVMGVLDIYGFEILEDNSFEQFVINYCNEKLQQVFIEMTLKEEQEEYKREGIPWTKVDYFDNGIICKLIEHNQRGILAMLDEECLRPGVVSDSTFLAKLNQLFSKHGHYESKVTQNAQRQYDHTMGLSCFRICHYAGKVTYNVTSFIDKNNDLLFRDLLQAMWKAQHPLLRSLFPEGNPKQASLKRPPTAGAQFKSSVAILMKNLYSKSPNYIRCIKPNEHQQRGQFSSDLVATQARYLGLLENVRVRRAGYAHRQGYGPFLERYRLLSRSTWPHWNGGDREGVEKVLGELSMSSGELAFGKTKIFIRSPKTLFYLEEQRRLRLQQLATLIQKIYRGWRCRTHYQLMRKSQILISSWFRGNMQKKCYGKIKASVLLIQAFVRGWKARKNYRKYFRSEAALTLADFIYKSMVQKFLLGLKNNLPSTNVLDKTWPAAPYKCLSTANQELQQLFYQWKCKRFRDQLSPKQVEILREKLCASELFKGKKASYPQSVPIPFCGDYIGLQGNPKLQKLKGGEEGPVLMAEAVKKVNRGNGKTSSRILLLTKGHVILTDTKKSQAKIVIGLDNVAGVSVTSLKDGLFSLHLSEMSSVGSKGDFLLVSEHVIELLTKMYRAVLDATQRQLTVTVTEKFSVRFKENSVAVKVVQGPAGGDNSKLRYKKKGSHCLEVTVQ</sequence>
<comment type="function">
    <text evidence="8">Involved in directing the movement of organelles along actin filaments.</text>
</comment>
<comment type="PTM">
    <text evidence="6">Phosphorylated by ALPK1.</text>
</comment>
<comment type="similarity">
    <text evidence="8">Belongs to the TRAFAC class myosin-kinesin ATPase superfamily. Myosin family.</text>
</comment>
<comment type="caution">
    <text evidence="8">Represents an unconventional myosin. This protein should not be confused with the conventional myosin-1 (MYH1).</text>
</comment>
<comment type="caution">
    <text evidence="5 7">MYO1A mutations have been reported to cause autosomal dominant non-syndromic hearing loss DFNA48 (PubMed:12736868). It was later shown that MYO1A is not associated with DFNA48 (PubMed:24616153).</text>
</comment>
<accession>Q9UBC5</accession>
<accession>Q9UQD7</accession>
<gene>
    <name type="primary">MYO1A</name>
    <name type="synonym">MYHL</name>
</gene>
<feature type="chain" id="PRO_0000123438" description="Unconventional myosin-Ia">
    <location>
        <begin position="1"/>
        <end position="1043"/>
    </location>
</feature>
<feature type="domain" description="Myosin motor" evidence="3">
    <location>
        <begin position="8"/>
        <end position="694"/>
    </location>
</feature>
<feature type="domain" description="IQ 1" evidence="2">
    <location>
        <begin position="697"/>
        <end position="719"/>
    </location>
</feature>
<feature type="domain" description="IQ 2" evidence="2">
    <location>
        <begin position="720"/>
        <end position="742"/>
    </location>
</feature>
<feature type="domain" description="IQ 3" evidence="2">
    <location>
        <begin position="743"/>
        <end position="772"/>
    </location>
</feature>
<feature type="domain" description="TH1" evidence="4">
    <location>
        <begin position="858"/>
        <end position="1042"/>
    </location>
</feature>
<feature type="region of interest" description="Actin-binding" evidence="1">
    <location>
        <begin position="571"/>
        <end position="593"/>
    </location>
</feature>
<feature type="binding site" evidence="1">
    <location>
        <begin position="101"/>
        <end position="108"/>
    </location>
    <ligand>
        <name>ATP</name>
        <dbReference type="ChEBI" id="CHEBI:30616"/>
    </ligand>
</feature>
<feature type="sequence variant" id="VAR_015945" description="Found in a patient with hearing loss; uncertain significance." evidence="5">
    <original>S</original>
    <variation>SS</variation>
    <location>
        <position position="116"/>
    </location>
</feature>
<feature type="sequence variant" id="VAR_015946" description="Found in a patient with hearing loss; uncertain significance; dbSNP:rs55679042." evidence="5">
    <original>V</original>
    <variation>M</variation>
    <location>
        <position position="306"/>
    </location>
</feature>
<feature type="sequence variant" id="VAR_015947" description="Found in a patient with hearing loss; uncertain significance; dbSNP:rs61753849." evidence="5">
    <original>E</original>
    <variation>D</variation>
    <location>
        <position position="385"/>
    </location>
</feature>
<feature type="sequence variant" id="VAR_050207" description="In dbSNP:rs4759043.">
    <original>P</original>
    <variation>L</variation>
    <location>
        <position position="426"/>
    </location>
</feature>
<feature type="sequence variant" id="VAR_050208" description="In dbSNP:rs12297756.">
    <original>C</original>
    <variation>S</variation>
    <location>
        <position position="506"/>
    </location>
</feature>
<feature type="sequence variant" id="VAR_020320" description="In dbSNP:rs2270738.">
    <original>F</original>
    <variation>L</variation>
    <location>
        <position position="600"/>
    </location>
</feature>
<feature type="sequence variant" id="VAR_015948" description="Found in a patient with hearing loss; benign; dbSNP:rs33962952." evidence="5 7">
    <original>G</original>
    <variation>E</variation>
    <location>
        <position position="662"/>
    </location>
</feature>
<feature type="sequence variant" id="VAR_015949" description="Found in a patient with hearing loss; uncertain significance; dbSNP:rs148808080." evidence="5">
    <original>G</original>
    <variation>D</variation>
    <location>
        <position position="674"/>
    </location>
</feature>
<feature type="sequence variant" id="VAR_015950" description="In dbSNP:rs113470661." evidence="5">
    <original>S</original>
    <variation>F</variation>
    <location>
        <position position="797"/>
    </location>
</feature>
<feature type="sequence variant" id="VAR_015951" description="Found in a patient with hearing loss; uncertain significance; dbSNP:rs121909306." evidence="5">
    <original>S</original>
    <variation>P</variation>
    <location>
        <position position="910"/>
    </location>
</feature>
<feature type="sequence variant" id="VAR_050209" description="In dbSNP:rs17119344.">
    <original>T</original>
    <variation>I</variation>
    <location>
        <position position="996"/>
    </location>
</feature>
<feature type="sequence conflict" description="In Ref. 3; AAC27437." evidence="8" ref="3">
    <original>Q</original>
    <variation>P</variation>
    <location>
        <position position="446"/>
    </location>
</feature>
<feature type="sequence conflict" description="In Ref. 3; AAC27437." evidence="8" ref="3">
    <original>R</original>
    <variation>G</variation>
    <location>
        <position position="712"/>
    </location>
</feature>
<reference key="1">
    <citation type="submission" date="1999-02" db="EMBL/GenBank/DDBJ databases">
        <title>Human brush border myosin I.</title>
        <authorList>
            <person name="Bikle D.D."/>
            <person name="Munson S.J."/>
        </authorList>
    </citation>
    <scope>NUCLEOTIDE SEQUENCE [MRNA]</scope>
    <source>
        <tissue>Intestine</tissue>
    </source>
</reference>
<reference key="2">
    <citation type="journal article" date="2000" name="J. Histochem. Cytochem.">
        <title>Brush border myosin I (BBMI): a basally localized transcript in human jejunal enterocytes.</title>
        <authorList>
            <person name="Li W."/>
            <person name="Wang J."/>
            <person name="Coluccio L.M."/>
            <person name="Matsudaira P."/>
            <person name="Grand R.J."/>
        </authorList>
    </citation>
    <scope>NUCLEOTIDE SEQUENCE [MRNA]</scope>
    <source>
        <tissue>Jejunum</tissue>
    </source>
</reference>
<reference key="3">
    <citation type="journal article" date="1998" name="Cell Motil. Cytoskeleton">
        <title>Human brush border myosin-I and myosin-Ic expression in human intestine and Caco-2BBe cells.</title>
        <authorList>
            <person name="Skowron J.F."/>
            <person name="Bement W.M."/>
            <person name="Mooseker M.S."/>
        </authorList>
    </citation>
    <scope>NUCLEOTIDE SEQUENCE [MRNA]</scope>
</reference>
<reference key="4">
    <citation type="journal article" date="2004" name="Genome Res.">
        <title>The status, quality, and expansion of the NIH full-length cDNA project: the Mammalian Gene Collection (MGC).</title>
        <authorList>
            <consortium name="The MGC Project Team"/>
        </authorList>
    </citation>
    <scope>NUCLEOTIDE SEQUENCE [LARGE SCALE MRNA]</scope>
    <source>
        <tissue>Placenta</tissue>
    </source>
</reference>
<reference key="5">
    <citation type="journal article" date="2005" name="J. Biol. Chem.">
        <title>Alpha-kinase 1, a new component in apical protein transport.</title>
        <authorList>
            <person name="Heine M."/>
            <person name="Cramm-Behrens C.I."/>
            <person name="Ansari A."/>
            <person name="Chu H.P."/>
            <person name="Ryazanov A.G."/>
            <person name="Naim H.Y."/>
            <person name="Jacob R."/>
        </authorList>
    </citation>
    <scope>PHOSPHORYLATION</scope>
</reference>
<reference key="6">
    <citation type="journal article" date="2003" name="Am. J. Hum. Genet.">
        <title>Multiple mutations of MYO1A, a cochlear-expressed gene, in sensorineural hearing loss.</title>
        <authorList>
            <person name="Donaudy F."/>
            <person name="Ferrara A."/>
            <person name="Esposito L."/>
            <person name="Hertzano R."/>
            <person name="Ben-David O."/>
            <person name="Bell R.E."/>
            <person name="Melchionda S."/>
            <person name="Zelante L."/>
            <person name="Avraham K.B."/>
            <person name="Gasparini P."/>
        </authorList>
    </citation>
    <scope>VARIANTS SER-116 INS; MET-306; ASP-385; GLU-662; ASP-674; PHE-797 AND PRO-910</scope>
</reference>
<reference key="7">
    <citation type="journal article" date="2014" name="Hum. Mutat.">
        <title>Targeted and genomewide NGS data disqualify mutations in MYO1A, the 'DFNA48 gene', as a cause of deafness.</title>
        <authorList>
            <person name="Eisenberger T."/>
            <person name="Di Donato N."/>
            <person name="Baig S.M."/>
            <person name="Neuhaus C."/>
            <person name="Beyer A."/>
            <person name="Decker E."/>
            <person name="Muerbe D."/>
            <person name="Decker C."/>
            <person name="Bergmann C."/>
            <person name="Bolz H.J."/>
        </authorList>
    </citation>
    <scope>VARIANT GLU-662</scope>
    <scope>LACK OF INVOLVEMENT IN DFNA48</scope>
</reference>
<organism>
    <name type="scientific">Homo sapiens</name>
    <name type="common">Human</name>
    <dbReference type="NCBI Taxonomy" id="9606"/>
    <lineage>
        <taxon>Eukaryota</taxon>
        <taxon>Metazoa</taxon>
        <taxon>Chordata</taxon>
        <taxon>Craniata</taxon>
        <taxon>Vertebrata</taxon>
        <taxon>Euteleostomi</taxon>
        <taxon>Mammalia</taxon>
        <taxon>Eutheria</taxon>
        <taxon>Euarchontoglires</taxon>
        <taxon>Primates</taxon>
        <taxon>Haplorrhini</taxon>
        <taxon>Catarrhini</taxon>
        <taxon>Hominidae</taxon>
        <taxon>Homo</taxon>
    </lineage>
</organism>
<evidence type="ECO:0000255" key="1"/>
<evidence type="ECO:0000255" key="2">
    <source>
        <dbReference type="PROSITE-ProRule" id="PRU00116"/>
    </source>
</evidence>
<evidence type="ECO:0000255" key="3">
    <source>
        <dbReference type="PROSITE-ProRule" id="PRU00782"/>
    </source>
</evidence>
<evidence type="ECO:0000255" key="4">
    <source>
        <dbReference type="PROSITE-ProRule" id="PRU01093"/>
    </source>
</evidence>
<evidence type="ECO:0000269" key="5">
    <source>
    </source>
</evidence>
<evidence type="ECO:0000269" key="6">
    <source>
    </source>
</evidence>
<evidence type="ECO:0000269" key="7">
    <source>
    </source>
</evidence>
<evidence type="ECO:0000305" key="8"/>
<keyword id="KW-0009">Actin-binding</keyword>
<keyword id="KW-0067">ATP-binding</keyword>
<keyword id="KW-0112">Calmodulin-binding</keyword>
<keyword id="KW-0505">Motor protein</keyword>
<keyword id="KW-0518">Myosin</keyword>
<keyword id="KW-0547">Nucleotide-binding</keyword>
<keyword id="KW-0597">Phosphoprotein</keyword>
<keyword id="KW-1267">Proteomics identification</keyword>
<keyword id="KW-1185">Reference proteome</keyword>
<keyword id="KW-0677">Repeat</keyword>
<proteinExistence type="evidence at protein level"/>
<dbReference type="EMBL" id="AF127026">
    <property type="protein sequence ID" value="AAD31189.1"/>
    <property type="molecule type" value="mRNA"/>
</dbReference>
<dbReference type="EMBL" id="AF105424">
    <property type="protein sequence ID" value="AAC78645.1"/>
    <property type="molecule type" value="mRNA"/>
</dbReference>
<dbReference type="EMBL" id="AF009961">
    <property type="protein sequence ID" value="AAC27437.1"/>
    <property type="molecule type" value="mRNA"/>
</dbReference>
<dbReference type="EMBL" id="BC059387">
    <property type="protein sequence ID" value="AAH59387.1"/>
    <property type="molecule type" value="mRNA"/>
</dbReference>
<dbReference type="CCDS" id="CCDS8929.1"/>
<dbReference type="RefSeq" id="NP_001242970.1">
    <property type="nucleotide sequence ID" value="NM_001256041.2"/>
</dbReference>
<dbReference type="RefSeq" id="NP_005370.1">
    <property type="nucleotide sequence ID" value="NM_005379.4"/>
</dbReference>
<dbReference type="RefSeq" id="XP_047284832.1">
    <property type="nucleotide sequence ID" value="XM_047428876.1"/>
</dbReference>
<dbReference type="RefSeq" id="XP_054228080.1">
    <property type="nucleotide sequence ID" value="XM_054372105.1"/>
</dbReference>
<dbReference type="SMR" id="Q9UBC5"/>
<dbReference type="BioGRID" id="110724">
    <property type="interactions" value="24"/>
</dbReference>
<dbReference type="FunCoup" id="Q9UBC5">
    <property type="interactions" value="94"/>
</dbReference>
<dbReference type="IntAct" id="Q9UBC5">
    <property type="interactions" value="7"/>
</dbReference>
<dbReference type="MINT" id="Q9UBC5"/>
<dbReference type="STRING" id="9606.ENSP00000393392"/>
<dbReference type="GlyGen" id="Q9UBC5">
    <property type="glycosylation" value="1 site, 1 O-linked glycan (1 site)"/>
</dbReference>
<dbReference type="iPTMnet" id="Q9UBC5"/>
<dbReference type="PhosphoSitePlus" id="Q9UBC5"/>
<dbReference type="SwissPalm" id="Q9UBC5"/>
<dbReference type="BioMuta" id="MYO1A"/>
<dbReference type="DMDM" id="13431715"/>
<dbReference type="jPOST" id="Q9UBC5"/>
<dbReference type="MassIVE" id="Q9UBC5"/>
<dbReference type="PaxDb" id="9606-ENSP00000393392"/>
<dbReference type="PeptideAtlas" id="Q9UBC5"/>
<dbReference type="ProteomicsDB" id="83941"/>
<dbReference type="Antibodypedia" id="28435">
    <property type="antibodies" value="93 antibodies from 23 providers"/>
</dbReference>
<dbReference type="DNASU" id="4640"/>
<dbReference type="Ensembl" id="ENST00000300119.8">
    <property type="protein sequence ID" value="ENSP00000300119.3"/>
    <property type="gene ID" value="ENSG00000166866.13"/>
</dbReference>
<dbReference type="Ensembl" id="ENST00000442789.6">
    <property type="protein sequence ID" value="ENSP00000393392.2"/>
    <property type="gene ID" value="ENSG00000166866.13"/>
</dbReference>
<dbReference type="GeneID" id="4640"/>
<dbReference type="KEGG" id="hsa:4640"/>
<dbReference type="MANE-Select" id="ENST00000300119.8">
    <property type="protein sequence ID" value="ENSP00000300119.3"/>
    <property type="RefSeq nucleotide sequence ID" value="NM_005379.4"/>
    <property type="RefSeq protein sequence ID" value="NP_005370.1"/>
</dbReference>
<dbReference type="UCSC" id="uc001smw.5">
    <property type="organism name" value="human"/>
</dbReference>
<dbReference type="AGR" id="HGNC:7595"/>
<dbReference type="CTD" id="4640"/>
<dbReference type="DisGeNET" id="4640"/>
<dbReference type="GeneCards" id="MYO1A"/>
<dbReference type="GeneReviews" id="MYO1A"/>
<dbReference type="HGNC" id="HGNC:7595">
    <property type="gene designation" value="MYO1A"/>
</dbReference>
<dbReference type="HPA" id="ENSG00000166866">
    <property type="expression patterns" value="Tissue enriched (intestine)"/>
</dbReference>
<dbReference type="MalaCards" id="MYO1A"/>
<dbReference type="MIM" id="601478">
    <property type="type" value="gene"/>
</dbReference>
<dbReference type="neXtProt" id="NX_Q9UBC5"/>
<dbReference type="OpenTargets" id="ENSG00000166866"/>
<dbReference type="Orphanet" id="90635">
    <property type="disease" value="Rare autosomal dominant non-syndromic sensorineural deafness type DFNA"/>
</dbReference>
<dbReference type="PharmGKB" id="PA31397"/>
<dbReference type="VEuPathDB" id="HostDB:ENSG00000166866"/>
<dbReference type="eggNOG" id="KOG0164">
    <property type="taxonomic scope" value="Eukaryota"/>
</dbReference>
<dbReference type="GeneTree" id="ENSGT00940000160660"/>
<dbReference type="HOGENOM" id="CLU_000192_7_7_1"/>
<dbReference type="InParanoid" id="Q9UBC5"/>
<dbReference type="OMA" id="IKPNEYQ"/>
<dbReference type="OrthoDB" id="10055605at2759"/>
<dbReference type="PAN-GO" id="Q9UBC5">
    <property type="GO annotations" value="11 GO annotations based on evolutionary models"/>
</dbReference>
<dbReference type="PhylomeDB" id="Q9UBC5"/>
<dbReference type="TreeFam" id="TF312960"/>
<dbReference type="PathwayCommons" id="Q9UBC5"/>
<dbReference type="SignaLink" id="Q9UBC5"/>
<dbReference type="BioGRID-ORCS" id="4640">
    <property type="hits" value="15 hits in 1147 CRISPR screens"/>
</dbReference>
<dbReference type="GeneWiki" id="MYO1A"/>
<dbReference type="GenomeRNAi" id="4640"/>
<dbReference type="Pharos" id="Q9UBC5">
    <property type="development level" value="Tbio"/>
</dbReference>
<dbReference type="PRO" id="PR:Q9UBC5"/>
<dbReference type="Proteomes" id="UP000005640">
    <property type="component" value="Chromosome 12"/>
</dbReference>
<dbReference type="RNAct" id="Q9UBC5">
    <property type="molecule type" value="protein"/>
</dbReference>
<dbReference type="Bgee" id="ENSG00000166866">
    <property type="expression patterns" value="Expressed in jejunal mucosa and 118 other cell types or tissues"/>
</dbReference>
<dbReference type="ExpressionAtlas" id="Q9UBC5">
    <property type="expression patterns" value="baseline and differential"/>
</dbReference>
<dbReference type="GO" id="GO:0015629">
    <property type="term" value="C:actin cytoskeleton"/>
    <property type="evidence" value="ECO:0000318"/>
    <property type="project" value="GO_Central"/>
</dbReference>
<dbReference type="GO" id="GO:0016324">
    <property type="term" value="C:apical plasma membrane"/>
    <property type="evidence" value="ECO:0007669"/>
    <property type="project" value="Ensembl"/>
</dbReference>
<dbReference type="GO" id="GO:0016323">
    <property type="term" value="C:basolateral plasma membrane"/>
    <property type="evidence" value="ECO:0000314"/>
    <property type="project" value="UniProtKB"/>
</dbReference>
<dbReference type="GO" id="GO:0005903">
    <property type="term" value="C:brush border"/>
    <property type="evidence" value="ECO:0000314"/>
    <property type="project" value="UniProtKB"/>
</dbReference>
<dbReference type="GO" id="GO:0030864">
    <property type="term" value="C:cortical actin cytoskeleton"/>
    <property type="evidence" value="ECO:0000314"/>
    <property type="project" value="UniProtKB"/>
</dbReference>
<dbReference type="GO" id="GO:0005737">
    <property type="term" value="C:cytoplasm"/>
    <property type="evidence" value="ECO:0000314"/>
    <property type="project" value="UniProtKB"/>
</dbReference>
<dbReference type="GO" id="GO:0031941">
    <property type="term" value="C:filamentous actin"/>
    <property type="evidence" value="ECO:0000314"/>
    <property type="project" value="UniProtKB"/>
</dbReference>
<dbReference type="GO" id="GO:0016328">
    <property type="term" value="C:lateral plasma membrane"/>
    <property type="evidence" value="ECO:0000314"/>
    <property type="project" value="UniProtKB"/>
</dbReference>
<dbReference type="GO" id="GO:0005902">
    <property type="term" value="C:microvillus"/>
    <property type="evidence" value="ECO:0000314"/>
    <property type="project" value="UniProtKB"/>
</dbReference>
<dbReference type="GO" id="GO:0016459">
    <property type="term" value="C:myosin complex"/>
    <property type="evidence" value="ECO:0007669"/>
    <property type="project" value="UniProtKB-KW"/>
</dbReference>
<dbReference type="GO" id="GO:0005886">
    <property type="term" value="C:plasma membrane"/>
    <property type="evidence" value="ECO:0000318"/>
    <property type="project" value="GO_Central"/>
</dbReference>
<dbReference type="GO" id="GO:0044853">
    <property type="term" value="C:plasma membrane raft"/>
    <property type="evidence" value="ECO:0007669"/>
    <property type="project" value="Ensembl"/>
</dbReference>
<dbReference type="GO" id="GO:0051015">
    <property type="term" value="F:actin filament binding"/>
    <property type="evidence" value="ECO:0000318"/>
    <property type="project" value="GO_Central"/>
</dbReference>
<dbReference type="GO" id="GO:0005524">
    <property type="term" value="F:ATP binding"/>
    <property type="evidence" value="ECO:0007669"/>
    <property type="project" value="UniProtKB-KW"/>
</dbReference>
<dbReference type="GO" id="GO:0005516">
    <property type="term" value="F:calmodulin binding"/>
    <property type="evidence" value="ECO:0007669"/>
    <property type="project" value="UniProtKB-KW"/>
</dbReference>
<dbReference type="GO" id="GO:0000146">
    <property type="term" value="F:microfilament motor activity"/>
    <property type="evidence" value="ECO:0000318"/>
    <property type="project" value="GO_Central"/>
</dbReference>
<dbReference type="GO" id="GO:0007015">
    <property type="term" value="P:actin filament organization"/>
    <property type="evidence" value="ECO:0000318"/>
    <property type="project" value="GO_Central"/>
</dbReference>
<dbReference type="GO" id="GO:0030048">
    <property type="term" value="P:actin filament-based movement"/>
    <property type="evidence" value="ECO:0000318"/>
    <property type="project" value="GO_Central"/>
</dbReference>
<dbReference type="GO" id="GO:0006897">
    <property type="term" value="P:endocytosis"/>
    <property type="evidence" value="ECO:0000318"/>
    <property type="project" value="GO_Central"/>
</dbReference>
<dbReference type="GO" id="GO:0030033">
    <property type="term" value="P:microvillus assembly"/>
    <property type="evidence" value="ECO:0007669"/>
    <property type="project" value="Ensembl"/>
</dbReference>
<dbReference type="GO" id="GO:0007605">
    <property type="term" value="P:sensory perception of sound"/>
    <property type="evidence" value="ECO:0000315"/>
    <property type="project" value="UniProtKB"/>
</dbReference>
<dbReference type="GO" id="GO:0051648">
    <property type="term" value="P:vesicle localization"/>
    <property type="evidence" value="ECO:0000315"/>
    <property type="project" value="UniProtKB"/>
</dbReference>
<dbReference type="CDD" id="cd01378">
    <property type="entry name" value="MYSc_Myo1"/>
    <property type="match status" value="1"/>
</dbReference>
<dbReference type="FunFam" id="1.10.10.820:FF:000001">
    <property type="entry name" value="Myosin heavy chain"/>
    <property type="match status" value="1"/>
</dbReference>
<dbReference type="FunFam" id="1.20.58.530:FF:000004">
    <property type="entry name" value="Unconventional myosin ID"/>
    <property type="match status" value="1"/>
</dbReference>
<dbReference type="FunFam" id="1.20.5.190:FF:000043">
    <property type="entry name" value="unconventional myosin-Ia isoform X1"/>
    <property type="match status" value="1"/>
</dbReference>
<dbReference type="FunFam" id="1.20.120.720:FF:000004">
    <property type="entry name" value="unconventional myosin-Ib isoform X1"/>
    <property type="match status" value="1"/>
</dbReference>
<dbReference type="Gene3D" id="1.10.10.820">
    <property type="match status" value="1"/>
</dbReference>
<dbReference type="Gene3D" id="1.20.5.190">
    <property type="match status" value="1"/>
</dbReference>
<dbReference type="Gene3D" id="1.20.58.530">
    <property type="match status" value="1"/>
</dbReference>
<dbReference type="Gene3D" id="6.20.240.20">
    <property type="match status" value="1"/>
</dbReference>
<dbReference type="Gene3D" id="3.40.850.10">
    <property type="entry name" value="Kinesin motor domain"/>
    <property type="match status" value="1"/>
</dbReference>
<dbReference type="Gene3D" id="1.20.120.720">
    <property type="entry name" value="Myosin VI head, motor domain, U50 subdomain"/>
    <property type="match status" value="1"/>
</dbReference>
<dbReference type="InterPro" id="IPR000048">
    <property type="entry name" value="IQ_motif_EF-hand-BS"/>
</dbReference>
<dbReference type="InterPro" id="IPR036961">
    <property type="entry name" value="Kinesin_motor_dom_sf"/>
</dbReference>
<dbReference type="InterPro" id="IPR001609">
    <property type="entry name" value="Myosin_head_motor_dom-like"/>
</dbReference>
<dbReference type="InterPro" id="IPR010926">
    <property type="entry name" value="Myosin_TH1"/>
</dbReference>
<dbReference type="InterPro" id="IPR036072">
    <property type="entry name" value="MYSc_Myo1"/>
</dbReference>
<dbReference type="InterPro" id="IPR027417">
    <property type="entry name" value="P-loop_NTPase"/>
</dbReference>
<dbReference type="PANTHER" id="PTHR13140">
    <property type="entry name" value="MYOSIN"/>
    <property type="match status" value="1"/>
</dbReference>
<dbReference type="PANTHER" id="PTHR13140:SF291">
    <property type="entry name" value="UNCONVENTIONAL MYOSIN-IA"/>
    <property type="match status" value="1"/>
</dbReference>
<dbReference type="Pfam" id="PF00612">
    <property type="entry name" value="IQ"/>
    <property type="match status" value="2"/>
</dbReference>
<dbReference type="Pfam" id="PF00063">
    <property type="entry name" value="Myosin_head"/>
    <property type="match status" value="1"/>
</dbReference>
<dbReference type="Pfam" id="PF06017">
    <property type="entry name" value="Myosin_TH1"/>
    <property type="match status" value="1"/>
</dbReference>
<dbReference type="PRINTS" id="PR00193">
    <property type="entry name" value="MYOSINHEAVY"/>
</dbReference>
<dbReference type="SMART" id="SM00015">
    <property type="entry name" value="IQ"/>
    <property type="match status" value="3"/>
</dbReference>
<dbReference type="SMART" id="SM00242">
    <property type="entry name" value="MYSc"/>
    <property type="match status" value="1"/>
</dbReference>
<dbReference type="SUPFAM" id="SSF52540">
    <property type="entry name" value="P-loop containing nucleoside triphosphate hydrolases"/>
    <property type="match status" value="1"/>
</dbReference>
<dbReference type="PROSITE" id="PS50096">
    <property type="entry name" value="IQ"/>
    <property type="match status" value="2"/>
</dbReference>
<dbReference type="PROSITE" id="PS51456">
    <property type="entry name" value="MYOSIN_MOTOR"/>
    <property type="match status" value="1"/>
</dbReference>
<dbReference type="PROSITE" id="PS51757">
    <property type="entry name" value="TH1"/>
    <property type="match status" value="1"/>
</dbReference>
<protein>
    <recommendedName>
        <fullName>Unconventional myosin-Ia</fullName>
    </recommendedName>
    <alternativeName>
        <fullName>Brush border myosin I</fullName>
        <shortName>BBM-I</shortName>
        <shortName>BBMI</shortName>
    </alternativeName>
    <alternativeName>
        <fullName>Myosin I heavy chain</fullName>
        <shortName>MIHC</shortName>
    </alternativeName>
</protein>